<protein>
    <recommendedName>
        <fullName evidence="2">Elongation factor Tu</fullName>
        <shortName evidence="2">EF-Tu</shortName>
        <ecNumber evidence="2">3.6.5.3</ecNumber>
    </recommendedName>
</protein>
<comment type="function">
    <text evidence="2">GTP hydrolase that promotes the GTP-dependent binding of aminoacyl-tRNA to the A-site of ribosomes during protein biosynthesis.</text>
</comment>
<comment type="catalytic activity">
    <reaction evidence="2">
        <text>GTP + H2O = GDP + phosphate + H(+)</text>
        <dbReference type="Rhea" id="RHEA:19669"/>
        <dbReference type="ChEBI" id="CHEBI:15377"/>
        <dbReference type="ChEBI" id="CHEBI:15378"/>
        <dbReference type="ChEBI" id="CHEBI:37565"/>
        <dbReference type="ChEBI" id="CHEBI:43474"/>
        <dbReference type="ChEBI" id="CHEBI:58189"/>
        <dbReference type="EC" id="3.6.5.3"/>
    </reaction>
    <physiologicalReaction direction="left-to-right" evidence="2">
        <dbReference type="Rhea" id="RHEA:19670"/>
    </physiologicalReaction>
</comment>
<comment type="subunit">
    <text evidence="2">Monomer.</text>
</comment>
<comment type="subcellular location">
    <subcellularLocation>
        <location evidence="2">Cytoplasm</location>
    </subcellularLocation>
</comment>
<comment type="similarity">
    <text evidence="2">Belongs to the TRAFAC class translation factor GTPase superfamily. Classic translation factor GTPase family. EF-Tu/EF-1A subfamily.</text>
</comment>
<proteinExistence type="inferred from homology"/>
<name>EFTU_BACTN</name>
<organism>
    <name type="scientific">Bacteroides thetaiotaomicron (strain ATCC 29148 / DSM 2079 / JCM 5827 / CCUG 10774 / NCTC 10582 / VPI-5482 / E50)</name>
    <dbReference type="NCBI Taxonomy" id="226186"/>
    <lineage>
        <taxon>Bacteria</taxon>
        <taxon>Pseudomonadati</taxon>
        <taxon>Bacteroidota</taxon>
        <taxon>Bacteroidia</taxon>
        <taxon>Bacteroidales</taxon>
        <taxon>Bacteroidaceae</taxon>
        <taxon>Bacteroides</taxon>
    </lineage>
</organism>
<evidence type="ECO:0000250" key="1"/>
<evidence type="ECO:0000255" key="2">
    <source>
        <dbReference type="HAMAP-Rule" id="MF_00118"/>
    </source>
</evidence>
<feature type="chain" id="PRO_1000015611" description="Elongation factor Tu">
    <location>
        <begin position="1"/>
        <end position="394"/>
    </location>
</feature>
<feature type="domain" description="tr-type G">
    <location>
        <begin position="10"/>
        <end position="205"/>
    </location>
</feature>
<feature type="region of interest" description="G1" evidence="1">
    <location>
        <begin position="19"/>
        <end position="26"/>
    </location>
</feature>
<feature type="region of interest" description="G2" evidence="1">
    <location>
        <begin position="60"/>
        <end position="64"/>
    </location>
</feature>
<feature type="region of interest" description="G3" evidence="1">
    <location>
        <begin position="81"/>
        <end position="84"/>
    </location>
</feature>
<feature type="region of interest" description="G4" evidence="1">
    <location>
        <begin position="136"/>
        <end position="139"/>
    </location>
</feature>
<feature type="region of interest" description="G5" evidence="1">
    <location>
        <begin position="174"/>
        <end position="176"/>
    </location>
</feature>
<feature type="binding site" evidence="2">
    <location>
        <begin position="19"/>
        <end position="26"/>
    </location>
    <ligand>
        <name>GTP</name>
        <dbReference type="ChEBI" id="CHEBI:37565"/>
    </ligand>
</feature>
<feature type="binding site" evidence="2">
    <location>
        <position position="26"/>
    </location>
    <ligand>
        <name>Mg(2+)</name>
        <dbReference type="ChEBI" id="CHEBI:18420"/>
    </ligand>
</feature>
<feature type="binding site" evidence="2">
    <location>
        <begin position="81"/>
        <end position="85"/>
    </location>
    <ligand>
        <name>GTP</name>
        <dbReference type="ChEBI" id="CHEBI:37565"/>
    </ligand>
</feature>
<feature type="binding site" evidence="2">
    <location>
        <begin position="136"/>
        <end position="139"/>
    </location>
    <ligand>
        <name>GTP</name>
        <dbReference type="ChEBI" id="CHEBI:37565"/>
    </ligand>
</feature>
<dbReference type="EC" id="3.6.5.3" evidence="2"/>
<dbReference type="EMBL" id="AE015928">
    <property type="protein sequence ID" value="AAO77846.1"/>
    <property type="molecule type" value="Genomic_DNA"/>
</dbReference>
<dbReference type="RefSeq" id="NP_811652.1">
    <property type="nucleotide sequence ID" value="NC_004663.1"/>
</dbReference>
<dbReference type="RefSeq" id="WP_008762026.1">
    <property type="nucleotide sequence ID" value="NZ_UYXG01000001.1"/>
</dbReference>
<dbReference type="SMR" id="Q8A463"/>
<dbReference type="FunCoup" id="Q8A463">
    <property type="interactions" value="605"/>
</dbReference>
<dbReference type="STRING" id="226186.BT_2740"/>
<dbReference type="PaxDb" id="226186-BT_2740"/>
<dbReference type="EnsemblBacteria" id="AAO77846">
    <property type="protein sequence ID" value="AAO77846"/>
    <property type="gene ID" value="BT_2740"/>
</dbReference>
<dbReference type="GeneID" id="69587602"/>
<dbReference type="KEGG" id="bth:BT_2740"/>
<dbReference type="PATRIC" id="fig|226186.12.peg.2784"/>
<dbReference type="eggNOG" id="COG0050">
    <property type="taxonomic scope" value="Bacteria"/>
</dbReference>
<dbReference type="HOGENOM" id="CLU_007265_0_0_10"/>
<dbReference type="InParanoid" id="Q8A463"/>
<dbReference type="OrthoDB" id="9804504at2"/>
<dbReference type="Proteomes" id="UP000001414">
    <property type="component" value="Chromosome"/>
</dbReference>
<dbReference type="GO" id="GO:0005737">
    <property type="term" value="C:cytoplasm"/>
    <property type="evidence" value="ECO:0007669"/>
    <property type="project" value="UniProtKB-SubCell"/>
</dbReference>
<dbReference type="GO" id="GO:0005525">
    <property type="term" value="F:GTP binding"/>
    <property type="evidence" value="ECO:0007669"/>
    <property type="project" value="UniProtKB-UniRule"/>
</dbReference>
<dbReference type="GO" id="GO:0003924">
    <property type="term" value="F:GTPase activity"/>
    <property type="evidence" value="ECO:0007669"/>
    <property type="project" value="InterPro"/>
</dbReference>
<dbReference type="GO" id="GO:0003746">
    <property type="term" value="F:translation elongation factor activity"/>
    <property type="evidence" value="ECO:0000318"/>
    <property type="project" value="GO_Central"/>
</dbReference>
<dbReference type="GO" id="GO:0006414">
    <property type="term" value="P:translational elongation"/>
    <property type="evidence" value="ECO:0000318"/>
    <property type="project" value="GO_Central"/>
</dbReference>
<dbReference type="CDD" id="cd01884">
    <property type="entry name" value="EF_Tu"/>
    <property type="match status" value="1"/>
</dbReference>
<dbReference type="CDD" id="cd03697">
    <property type="entry name" value="EFTU_II"/>
    <property type="match status" value="1"/>
</dbReference>
<dbReference type="CDD" id="cd03707">
    <property type="entry name" value="EFTU_III"/>
    <property type="match status" value="1"/>
</dbReference>
<dbReference type="FunFam" id="2.40.30.10:FF:000002">
    <property type="entry name" value="Elongation factor Tu"/>
    <property type="match status" value="1"/>
</dbReference>
<dbReference type="FunFam" id="3.40.50.300:FF:000003">
    <property type="entry name" value="Elongation factor Tu"/>
    <property type="match status" value="1"/>
</dbReference>
<dbReference type="FunFam" id="2.40.30.10:FF:000020">
    <property type="entry name" value="Translation elongation factor EF-1"/>
    <property type="match status" value="1"/>
</dbReference>
<dbReference type="Gene3D" id="3.40.50.300">
    <property type="entry name" value="P-loop containing nucleotide triphosphate hydrolases"/>
    <property type="match status" value="1"/>
</dbReference>
<dbReference type="Gene3D" id="2.40.30.10">
    <property type="entry name" value="Translation factors"/>
    <property type="match status" value="2"/>
</dbReference>
<dbReference type="HAMAP" id="MF_00118_B">
    <property type="entry name" value="EF_Tu_B"/>
    <property type="match status" value="1"/>
</dbReference>
<dbReference type="InterPro" id="IPR041709">
    <property type="entry name" value="EF-Tu_GTP-bd"/>
</dbReference>
<dbReference type="InterPro" id="IPR050055">
    <property type="entry name" value="EF-Tu_GTPase"/>
</dbReference>
<dbReference type="InterPro" id="IPR004161">
    <property type="entry name" value="EFTu-like_2"/>
</dbReference>
<dbReference type="InterPro" id="IPR033720">
    <property type="entry name" value="EFTU_2"/>
</dbReference>
<dbReference type="InterPro" id="IPR031157">
    <property type="entry name" value="G_TR_CS"/>
</dbReference>
<dbReference type="InterPro" id="IPR027417">
    <property type="entry name" value="P-loop_NTPase"/>
</dbReference>
<dbReference type="InterPro" id="IPR005225">
    <property type="entry name" value="Small_GTP-bd"/>
</dbReference>
<dbReference type="InterPro" id="IPR000795">
    <property type="entry name" value="T_Tr_GTP-bd_dom"/>
</dbReference>
<dbReference type="InterPro" id="IPR009000">
    <property type="entry name" value="Transl_B-barrel_sf"/>
</dbReference>
<dbReference type="InterPro" id="IPR009001">
    <property type="entry name" value="Transl_elong_EF1A/Init_IF2_C"/>
</dbReference>
<dbReference type="InterPro" id="IPR004541">
    <property type="entry name" value="Transl_elong_EFTu/EF1A_bac/org"/>
</dbReference>
<dbReference type="InterPro" id="IPR004160">
    <property type="entry name" value="Transl_elong_EFTu/EF1A_C"/>
</dbReference>
<dbReference type="NCBIfam" id="TIGR00485">
    <property type="entry name" value="EF-Tu"/>
    <property type="match status" value="1"/>
</dbReference>
<dbReference type="NCBIfam" id="NF000766">
    <property type="entry name" value="PRK00049.1"/>
    <property type="match status" value="1"/>
</dbReference>
<dbReference type="NCBIfam" id="NF009372">
    <property type="entry name" value="PRK12735.1"/>
    <property type="match status" value="1"/>
</dbReference>
<dbReference type="NCBIfam" id="NF009373">
    <property type="entry name" value="PRK12736.1"/>
    <property type="match status" value="1"/>
</dbReference>
<dbReference type="NCBIfam" id="TIGR00231">
    <property type="entry name" value="small_GTP"/>
    <property type="match status" value="1"/>
</dbReference>
<dbReference type="PANTHER" id="PTHR43721:SF22">
    <property type="entry name" value="ELONGATION FACTOR TU, MITOCHONDRIAL"/>
    <property type="match status" value="1"/>
</dbReference>
<dbReference type="PANTHER" id="PTHR43721">
    <property type="entry name" value="ELONGATION FACTOR TU-RELATED"/>
    <property type="match status" value="1"/>
</dbReference>
<dbReference type="Pfam" id="PF00009">
    <property type="entry name" value="GTP_EFTU"/>
    <property type="match status" value="1"/>
</dbReference>
<dbReference type="Pfam" id="PF03144">
    <property type="entry name" value="GTP_EFTU_D2"/>
    <property type="match status" value="1"/>
</dbReference>
<dbReference type="Pfam" id="PF03143">
    <property type="entry name" value="GTP_EFTU_D3"/>
    <property type="match status" value="1"/>
</dbReference>
<dbReference type="PRINTS" id="PR00315">
    <property type="entry name" value="ELONGATNFCT"/>
</dbReference>
<dbReference type="SUPFAM" id="SSF50465">
    <property type="entry name" value="EF-Tu/eEF-1alpha/eIF2-gamma C-terminal domain"/>
    <property type="match status" value="1"/>
</dbReference>
<dbReference type="SUPFAM" id="SSF52540">
    <property type="entry name" value="P-loop containing nucleoside triphosphate hydrolases"/>
    <property type="match status" value="1"/>
</dbReference>
<dbReference type="SUPFAM" id="SSF50447">
    <property type="entry name" value="Translation proteins"/>
    <property type="match status" value="1"/>
</dbReference>
<dbReference type="PROSITE" id="PS00301">
    <property type="entry name" value="G_TR_1"/>
    <property type="match status" value="1"/>
</dbReference>
<dbReference type="PROSITE" id="PS51722">
    <property type="entry name" value="G_TR_2"/>
    <property type="match status" value="1"/>
</dbReference>
<sequence>MAKEKFERTKPHVNIGTIGHVDHGKTTLTAAITTVLAKKGLSELRSFDSIDNAPEEKERGITINTSHVEYETANRHYAHVDCPGHADYVKNMVTGAAQMDGAIIVCAATDGPMPQTREHILLARQVNVPRLVVFLNKCDMVDDEEMLELVEMEMRELLSFYDFDGDNTPIIQGSALGALNGVEKWEDKVMELMDAVDNWIPLPPRDVDKPFLMPVEDVFSITGRGTVATGRIESGIIHVGDEVEILGLGEDKKSVVTGVEMFRKLLDQGEAGDNVGLLLRGVDKNEIKRGMVLCKPGQIKPHSRFKAEVYILKKEEGGRHTPFHNKYRPQFYLRTMDCTGEITLPEGTEMVMPGDNVTITVELIYPVALNPGLRFAIREGGRTVGAGQITEIID</sequence>
<accession>Q8A463</accession>
<reference key="1">
    <citation type="journal article" date="2003" name="Science">
        <title>A genomic view of the human-Bacteroides thetaiotaomicron symbiosis.</title>
        <authorList>
            <person name="Xu J."/>
            <person name="Bjursell M.K."/>
            <person name="Himrod J."/>
            <person name="Deng S."/>
            <person name="Carmichael L.K."/>
            <person name="Chiang H.C."/>
            <person name="Hooper L.V."/>
            <person name="Gordon J.I."/>
        </authorList>
    </citation>
    <scope>NUCLEOTIDE SEQUENCE [LARGE SCALE GENOMIC DNA]</scope>
    <source>
        <strain>ATCC 29148 / DSM 2079 / JCM 5827 / CCUG 10774 / NCTC 10582 / VPI-5482 / E50</strain>
    </source>
</reference>
<gene>
    <name evidence="2" type="primary">tuf</name>
    <name type="ordered locus">BT_2740</name>
</gene>
<keyword id="KW-0963">Cytoplasm</keyword>
<keyword id="KW-0251">Elongation factor</keyword>
<keyword id="KW-0342">GTP-binding</keyword>
<keyword id="KW-0378">Hydrolase</keyword>
<keyword id="KW-0460">Magnesium</keyword>
<keyword id="KW-0479">Metal-binding</keyword>
<keyword id="KW-0547">Nucleotide-binding</keyword>
<keyword id="KW-0648">Protein biosynthesis</keyword>
<keyword id="KW-1185">Reference proteome</keyword>